<sequence>MSTREGSLWGGRFADGPSDALAALSKSTHFDWVLAPYDIVASRAHTVILYRAGLLSEEQRDGLLAGLDSLAEDVADGSFTPLVTDEDVHAALERGLIDRVGPDLGGRLRAGRSRNDQVATLFRMWLRDAVRRVAAGALDVVGALVAQAAAHPEAIMPGKTHLQSAQPVLLAHHLLAHAHPLLRDVDRIVDFDKRAAVSPYGSGALAGSSLGLDPDAIAAELGFASAADNSIDATASRDFAAEAAFVFAMIGVDLSRLAEDVILWSSTEFGYVKLHDAWSTGSSIMPQKKNPDIAELARGKSGRLIGNLAGLLATLKAQPLAYNRDLQEDKEPVFDAVAQLELVLPAMAGLVGSLTFDVQRMAALAPAGYTLATDIAEWLVRQGVPFRSAHEAAGAAVRAAEQRAVGLDELTDDELAAISPALTPQVREVLTIEGSVSSRDARGGTAPARVAEQIDTVAATAARLRERLGGPA</sequence>
<feature type="chain" id="PRO_0000137792" description="Argininosuccinate lyase">
    <location>
        <begin position="1"/>
        <end position="472"/>
    </location>
</feature>
<comment type="catalytic activity">
    <reaction evidence="1">
        <text>2-(N(omega)-L-arginino)succinate = fumarate + L-arginine</text>
        <dbReference type="Rhea" id="RHEA:24020"/>
        <dbReference type="ChEBI" id="CHEBI:29806"/>
        <dbReference type="ChEBI" id="CHEBI:32682"/>
        <dbReference type="ChEBI" id="CHEBI:57472"/>
        <dbReference type="EC" id="4.3.2.1"/>
    </reaction>
</comment>
<comment type="pathway">
    <text evidence="1">Amino-acid biosynthesis; L-arginine biosynthesis; L-arginine from L-ornithine and carbamoyl phosphate: step 3/3.</text>
</comment>
<comment type="subcellular location">
    <subcellularLocation>
        <location evidence="1">Cytoplasm</location>
    </subcellularLocation>
</comment>
<comment type="similarity">
    <text evidence="1">Belongs to the lyase 1 family. Argininosuccinate lyase subfamily.</text>
</comment>
<protein>
    <recommendedName>
        <fullName evidence="1">Argininosuccinate lyase</fullName>
        <shortName evidence="1">ASAL</shortName>
        <ecNumber evidence="1">4.3.2.1</ecNumber>
    </recommendedName>
    <alternativeName>
        <fullName evidence="1">Arginosuccinase</fullName>
    </alternativeName>
</protein>
<evidence type="ECO:0000255" key="1">
    <source>
        <dbReference type="HAMAP-Rule" id="MF_00006"/>
    </source>
</evidence>
<proteinExistence type="inferred from homology"/>
<gene>
    <name evidence="1" type="primary">argH</name>
    <name type="ordered locus">MAP_1368</name>
</gene>
<dbReference type="EC" id="4.3.2.1" evidence="1"/>
<dbReference type="EMBL" id="AE016958">
    <property type="protein sequence ID" value="AAS03685.1"/>
    <property type="molecule type" value="Genomic_DNA"/>
</dbReference>
<dbReference type="RefSeq" id="WP_003876282.1">
    <property type="nucleotide sequence ID" value="NZ_CP106873.1"/>
</dbReference>
<dbReference type="SMR" id="Q740I3"/>
<dbReference type="STRING" id="262316.MAP_1368"/>
<dbReference type="KEGG" id="mpa:MAP_1368"/>
<dbReference type="eggNOG" id="COG0165">
    <property type="taxonomic scope" value="Bacteria"/>
</dbReference>
<dbReference type="HOGENOM" id="CLU_027272_2_2_11"/>
<dbReference type="UniPathway" id="UPA00068">
    <property type="reaction ID" value="UER00114"/>
</dbReference>
<dbReference type="Proteomes" id="UP000000580">
    <property type="component" value="Chromosome"/>
</dbReference>
<dbReference type="GO" id="GO:0005829">
    <property type="term" value="C:cytosol"/>
    <property type="evidence" value="ECO:0007669"/>
    <property type="project" value="TreeGrafter"/>
</dbReference>
<dbReference type="GO" id="GO:0004056">
    <property type="term" value="F:argininosuccinate lyase activity"/>
    <property type="evidence" value="ECO:0007669"/>
    <property type="project" value="UniProtKB-UniRule"/>
</dbReference>
<dbReference type="GO" id="GO:0042450">
    <property type="term" value="P:arginine biosynthetic process via ornithine"/>
    <property type="evidence" value="ECO:0007669"/>
    <property type="project" value="InterPro"/>
</dbReference>
<dbReference type="GO" id="GO:0006526">
    <property type="term" value="P:L-arginine biosynthetic process"/>
    <property type="evidence" value="ECO:0007669"/>
    <property type="project" value="UniProtKB-UniRule"/>
</dbReference>
<dbReference type="CDD" id="cd01359">
    <property type="entry name" value="Argininosuccinate_lyase"/>
    <property type="match status" value="1"/>
</dbReference>
<dbReference type="FunFam" id="1.10.40.30:FF:000001">
    <property type="entry name" value="Argininosuccinate lyase"/>
    <property type="match status" value="1"/>
</dbReference>
<dbReference type="FunFam" id="1.20.200.10:FF:000015">
    <property type="entry name" value="argininosuccinate lyase isoform X2"/>
    <property type="match status" value="1"/>
</dbReference>
<dbReference type="Gene3D" id="1.10.40.30">
    <property type="entry name" value="Fumarase/aspartase (C-terminal domain)"/>
    <property type="match status" value="1"/>
</dbReference>
<dbReference type="Gene3D" id="1.20.200.10">
    <property type="entry name" value="Fumarase/aspartase (Central domain)"/>
    <property type="match status" value="1"/>
</dbReference>
<dbReference type="Gene3D" id="1.10.275.10">
    <property type="entry name" value="Fumarase/aspartase (N-terminal domain)"/>
    <property type="match status" value="1"/>
</dbReference>
<dbReference type="HAMAP" id="MF_00006">
    <property type="entry name" value="Arg_succ_lyase"/>
    <property type="match status" value="1"/>
</dbReference>
<dbReference type="InterPro" id="IPR029419">
    <property type="entry name" value="Arg_succ_lyase_C"/>
</dbReference>
<dbReference type="InterPro" id="IPR009049">
    <property type="entry name" value="Argininosuccinate_lyase"/>
</dbReference>
<dbReference type="InterPro" id="IPR024083">
    <property type="entry name" value="Fumarase/histidase_N"/>
</dbReference>
<dbReference type="InterPro" id="IPR020557">
    <property type="entry name" value="Fumarate_lyase_CS"/>
</dbReference>
<dbReference type="InterPro" id="IPR000362">
    <property type="entry name" value="Fumarate_lyase_fam"/>
</dbReference>
<dbReference type="InterPro" id="IPR022761">
    <property type="entry name" value="Fumarate_lyase_N"/>
</dbReference>
<dbReference type="InterPro" id="IPR008948">
    <property type="entry name" value="L-Aspartase-like"/>
</dbReference>
<dbReference type="NCBIfam" id="TIGR00838">
    <property type="entry name" value="argH"/>
    <property type="match status" value="1"/>
</dbReference>
<dbReference type="PANTHER" id="PTHR43814">
    <property type="entry name" value="ARGININOSUCCINATE LYASE"/>
    <property type="match status" value="1"/>
</dbReference>
<dbReference type="PANTHER" id="PTHR43814:SF1">
    <property type="entry name" value="ARGININOSUCCINATE LYASE"/>
    <property type="match status" value="1"/>
</dbReference>
<dbReference type="Pfam" id="PF14698">
    <property type="entry name" value="ASL_C2"/>
    <property type="match status" value="1"/>
</dbReference>
<dbReference type="Pfam" id="PF00206">
    <property type="entry name" value="Lyase_1"/>
    <property type="match status" value="1"/>
</dbReference>
<dbReference type="PRINTS" id="PR00145">
    <property type="entry name" value="ARGSUCLYASE"/>
</dbReference>
<dbReference type="PRINTS" id="PR00149">
    <property type="entry name" value="FUMRATELYASE"/>
</dbReference>
<dbReference type="SUPFAM" id="SSF48557">
    <property type="entry name" value="L-aspartase-like"/>
    <property type="match status" value="1"/>
</dbReference>
<dbReference type="PROSITE" id="PS00163">
    <property type="entry name" value="FUMARATE_LYASES"/>
    <property type="match status" value="1"/>
</dbReference>
<reference key="1">
    <citation type="journal article" date="2005" name="Proc. Natl. Acad. Sci. U.S.A.">
        <title>The complete genome sequence of Mycobacterium avium subspecies paratuberculosis.</title>
        <authorList>
            <person name="Li L."/>
            <person name="Bannantine J.P."/>
            <person name="Zhang Q."/>
            <person name="Amonsin A."/>
            <person name="May B.J."/>
            <person name="Alt D."/>
            <person name="Banerji N."/>
            <person name="Kanjilal S."/>
            <person name="Kapur V."/>
        </authorList>
    </citation>
    <scope>NUCLEOTIDE SEQUENCE [LARGE SCALE GENOMIC DNA]</scope>
    <source>
        <strain>ATCC BAA-968 / K-10</strain>
    </source>
</reference>
<organism>
    <name type="scientific">Mycolicibacterium paratuberculosis (strain ATCC BAA-968 / K-10)</name>
    <name type="common">Mycobacterium paratuberculosis</name>
    <dbReference type="NCBI Taxonomy" id="262316"/>
    <lineage>
        <taxon>Bacteria</taxon>
        <taxon>Bacillati</taxon>
        <taxon>Actinomycetota</taxon>
        <taxon>Actinomycetes</taxon>
        <taxon>Mycobacteriales</taxon>
        <taxon>Mycobacteriaceae</taxon>
        <taxon>Mycobacterium</taxon>
        <taxon>Mycobacterium avium complex (MAC)</taxon>
    </lineage>
</organism>
<keyword id="KW-0028">Amino-acid biosynthesis</keyword>
<keyword id="KW-0055">Arginine biosynthesis</keyword>
<keyword id="KW-0963">Cytoplasm</keyword>
<keyword id="KW-0456">Lyase</keyword>
<keyword id="KW-1185">Reference proteome</keyword>
<accession>Q740I3</accession>
<name>ARLY_MYCPA</name>